<name>SLYX_XANOM</name>
<evidence type="ECO:0000255" key="1">
    <source>
        <dbReference type="HAMAP-Rule" id="MF_00715"/>
    </source>
</evidence>
<gene>
    <name evidence="1" type="primary">slyX</name>
    <name type="ordered locus">XOO1947</name>
</gene>
<dbReference type="EMBL" id="AP008229">
    <property type="protein sequence ID" value="BAE68702.1"/>
    <property type="molecule type" value="Genomic_DNA"/>
</dbReference>
<dbReference type="RefSeq" id="WP_011258777.1">
    <property type="nucleotide sequence ID" value="NC_007705.1"/>
</dbReference>
<dbReference type="SMR" id="Q2P425"/>
<dbReference type="KEGG" id="xom:XOO1947"/>
<dbReference type="HOGENOM" id="CLU_180796_4_2_6"/>
<dbReference type="Gene3D" id="1.20.5.300">
    <property type="match status" value="1"/>
</dbReference>
<dbReference type="HAMAP" id="MF_00715">
    <property type="entry name" value="SlyX"/>
    <property type="match status" value="1"/>
</dbReference>
<dbReference type="InterPro" id="IPR007236">
    <property type="entry name" value="SlyX"/>
</dbReference>
<dbReference type="NCBIfam" id="NF002024">
    <property type="entry name" value="PRK00846.1"/>
    <property type="match status" value="1"/>
</dbReference>
<dbReference type="PANTHER" id="PTHR36508">
    <property type="entry name" value="PROTEIN SLYX"/>
    <property type="match status" value="1"/>
</dbReference>
<dbReference type="PANTHER" id="PTHR36508:SF1">
    <property type="entry name" value="PROTEIN SLYX"/>
    <property type="match status" value="1"/>
</dbReference>
<dbReference type="Pfam" id="PF04102">
    <property type="entry name" value="SlyX"/>
    <property type="match status" value="1"/>
</dbReference>
<feature type="chain" id="PRO_1000045745" description="Protein SlyX homolog">
    <location>
        <begin position="1"/>
        <end position="78"/>
    </location>
</feature>
<organism>
    <name type="scientific">Xanthomonas oryzae pv. oryzae (strain MAFF 311018)</name>
    <dbReference type="NCBI Taxonomy" id="342109"/>
    <lineage>
        <taxon>Bacteria</taxon>
        <taxon>Pseudomonadati</taxon>
        <taxon>Pseudomonadota</taxon>
        <taxon>Gammaproteobacteria</taxon>
        <taxon>Lysobacterales</taxon>
        <taxon>Lysobacteraceae</taxon>
        <taxon>Xanthomonas</taxon>
    </lineage>
</organism>
<sequence>MHEQLSPRDQALEARLVELETRLSFQEQALNELSEALADARLTGARNAELIRHLLDDLGKVRSTLFADAADEPPPPHY</sequence>
<comment type="similarity">
    <text evidence="1">Belongs to the SlyX family.</text>
</comment>
<accession>Q2P425</accession>
<reference key="1">
    <citation type="journal article" date="2005" name="Jpn. Agric. Res. Q.">
        <title>Genome sequence of Xanthomonas oryzae pv. oryzae suggests contribution of large numbers of effector genes and insertion sequences to its race diversity.</title>
        <authorList>
            <person name="Ochiai H."/>
            <person name="Inoue Y."/>
            <person name="Takeya M."/>
            <person name="Sasaki A."/>
            <person name="Kaku H."/>
        </authorList>
    </citation>
    <scope>NUCLEOTIDE SEQUENCE [LARGE SCALE GENOMIC DNA]</scope>
    <source>
        <strain>MAFF 311018</strain>
    </source>
</reference>
<proteinExistence type="inferred from homology"/>
<protein>
    <recommendedName>
        <fullName evidence="1">Protein SlyX homolog</fullName>
    </recommendedName>
</protein>